<accession>Q9CPB5</accession>
<keyword id="KW-0963">Cytoplasm</keyword>
<keyword id="KW-0238">DNA-binding</keyword>
<keyword id="KW-1185">Reference proteome</keyword>
<keyword id="KW-0677">Repeat</keyword>
<keyword id="KW-0804">Transcription</keyword>
<keyword id="KW-0805">Transcription regulation</keyword>
<sequence length="152" mass="17118">MFRGASAINLDSKGRIAIPTRYRAEIIEQNAGQMVCTVDIRQPCLLLYPLKEWELVEQKLSALANFDLTHRSLQRVMLGYATECELDSAGRILISGPLRLHAKLEKSLMLVGQLNKFEIWSDAEWHAQIEQDMALGASGQFALSEELKMLSL</sequence>
<organism>
    <name type="scientific">Pasteurella multocida (strain Pm70)</name>
    <dbReference type="NCBI Taxonomy" id="272843"/>
    <lineage>
        <taxon>Bacteria</taxon>
        <taxon>Pseudomonadati</taxon>
        <taxon>Pseudomonadota</taxon>
        <taxon>Gammaproteobacteria</taxon>
        <taxon>Pasteurellales</taxon>
        <taxon>Pasteurellaceae</taxon>
        <taxon>Pasteurella</taxon>
    </lineage>
</organism>
<protein>
    <recommendedName>
        <fullName>Transcriptional regulator MraZ</fullName>
    </recommendedName>
</protein>
<dbReference type="EMBL" id="AE004439">
    <property type="protein sequence ID" value="AAK02217.1"/>
    <property type="molecule type" value="Genomic_DNA"/>
</dbReference>
<dbReference type="RefSeq" id="WP_005720203.1">
    <property type="nucleotide sequence ID" value="NC_002663.1"/>
</dbReference>
<dbReference type="SMR" id="Q9CPB5"/>
<dbReference type="STRING" id="272843.PM0133"/>
<dbReference type="EnsemblBacteria" id="AAK02217">
    <property type="protein sequence ID" value="AAK02217"/>
    <property type="gene ID" value="PM0133"/>
</dbReference>
<dbReference type="GeneID" id="77207481"/>
<dbReference type="KEGG" id="pmu:PM0133"/>
<dbReference type="HOGENOM" id="CLU_107907_2_0_6"/>
<dbReference type="OrthoDB" id="9807753at2"/>
<dbReference type="Proteomes" id="UP000000809">
    <property type="component" value="Chromosome"/>
</dbReference>
<dbReference type="GO" id="GO:0005737">
    <property type="term" value="C:cytoplasm"/>
    <property type="evidence" value="ECO:0007669"/>
    <property type="project" value="UniProtKB-UniRule"/>
</dbReference>
<dbReference type="GO" id="GO:0009295">
    <property type="term" value="C:nucleoid"/>
    <property type="evidence" value="ECO:0007669"/>
    <property type="project" value="UniProtKB-SubCell"/>
</dbReference>
<dbReference type="GO" id="GO:0003700">
    <property type="term" value="F:DNA-binding transcription factor activity"/>
    <property type="evidence" value="ECO:0007669"/>
    <property type="project" value="UniProtKB-UniRule"/>
</dbReference>
<dbReference type="GO" id="GO:0000976">
    <property type="term" value="F:transcription cis-regulatory region binding"/>
    <property type="evidence" value="ECO:0007669"/>
    <property type="project" value="TreeGrafter"/>
</dbReference>
<dbReference type="GO" id="GO:2000143">
    <property type="term" value="P:negative regulation of DNA-templated transcription initiation"/>
    <property type="evidence" value="ECO:0007669"/>
    <property type="project" value="TreeGrafter"/>
</dbReference>
<dbReference type="CDD" id="cd16321">
    <property type="entry name" value="MraZ_C"/>
    <property type="match status" value="1"/>
</dbReference>
<dbReference type="CDD" id="cd16320">
    <property type="entry name" value="MraZ_N"/>
    <property type="match status" value="1"/>
</dbReference>
<dbReference type="FunFam" id="3.40.1550.20:FF:000001">
    <property type="entry name" value="Transcriptional regulator MraZ"/>
    <property type="match status" value="1"/>
</dbReference>
<dbReference type="Gene3D" id="3.40.1550.20">
    <property type="entry name" value="Transcriptional regulator MraZ domain"/>
    <property type="match status" value="1"/>
</dbReference>
<dbReference type="HAMAP" id="MF_01008">
    <property type="entry name" value="MraZ"/>
    <property type="match status" value="1"/>
</dbReference>
<dbReference type="InterPro" id="IPR003444">
    <property type="entry name" value="MraZ"/>
</dbReference>
<dbReference type="InterPro" id="IPR035644">
    <property type="entry name" value="MraZ_C"/>
</dbReference>
<dbReference type="InterPro" id="IPR020603">
    <property type="entry name" value="MraZ_dom"/>
</dbReference>
<dbReference type="InterPro" id="IPR035642">
    <property type="entry name" value="MraZ_N"/>
</dbReference>
<dbReference type="InterPro" id="IPR038619">
    <property type="entry name" value="MraZ_sf"/>
</dbReference>
<dbReference type="InterPro" id="IPR007159">
    <property type="entry name" value="SpoVT-AbrB_dom"/>
</dbReference>
<dbReference type="InterPro" id="IPR037914">
    <property type="entry name" value="SpoVT-AbrB_sf"/>
</dbReference>
<dbReference type="NCBIfam" id="TIGR00242">
    <property type="entry name" value="division/cell wall cluster transcriptional repressor MraZ"/>
    <property type="match status" value="1"/>
</dbReference>
<dbReference type="PANTHER" id="PTHR34701">
    <property type="entry name" value="TRANSCRIPTIONAL REGULATOR MRAZ"/>
    <property type="match status" value="1"/>
</dbReference>
<dbReference type="PANTHER" id="PTHR34701:SF1">
    <property type="entry name" value="TRANSCRIPTIONAL REGULATOR MRAZ"/>
    <property type="match status" value="1"/>
</dbReference>
<dbReference type="Pfam" id="PF02381">
    <property type="entry name" value="MraZ"/>
    <property type="match status" value="2"/>
</dbReference>
<dbReference type="SUPFAM" id="SSF89447">
    <property type="entry name" value="AbrB/MazE/MraZ-like"/>
    <property type="match status" value="1"/>
</dbReference>
<dbReference type="PROSITE" id="PS51740">
    <property type="entry name" value="SPOVT_ABRB"/>
    <property type="match status" value="2"/>
</dbReference>
<comment type="subunit">
    <text evidence="1">Forms oligomers.</text>
</comment>
<comment type="subcellular location">
    <subcellularLocation>
        <location evidence="1">Cytoplasm</location>
        <location evidence="1">Nucleoid</location>
    </subcellularLocation>
</comment>
<comment type="similarity">
    <text evidence="1">Belongs to the MraZ family.</text>
</comment>
<proteinExistence type="inferred from homology"/>
<name>MRAZ_PASMU</name>
<evidence type="ECO:0000255" key="1">
    <source>
        <dbReference type="HAMAP-Rule" id="MF_01008"/>
    </source>
</evidence>
<evidence type="ECO:0000255" key="2">
    <source>
        <dbReference type="PROSITE-ProRule" id="PRU01076"/>
    </source>
</evidence>
<feature type="chain" id="PRO_0000108518" description="Transcriptional regulator MraZ">
    <location>
        <begin position="1"/>
        <end position="152"/>
    </location>
</feature>
<feature type="domain" description="SpoVT-AbrB 1" evidence="2">
    <location>
        <begin position="5"/>
        <end position="52"/>
    </location>
</feature>
<feature type="domain" description="SpoVT-AbrB 2" evidence="2">
    <location>
        <begin position="81"/>
        <end position="124"/>
    </location>
</feature>
<gene>
    <name evidence="1" type="primary">mraZ</name>
    <name type="ordered locus">PM0133</name>
</gene>
<reference key="1">
    <citation type="journal article" date="2001" name="Proc. Natl. Acad. Sci. U.S.A.">
        <title>Complete genomic sequence of Pasteurella multocida Pm70.</title>
        <authorList>
            <person name="May B.J."/>
            <person name="Zhang Q."/>
            <person name="Li L.L."/>
            <person name="Paustian M.L."/>
            <person name="Whittam T.S."/>
            <person name="Kapur V."/>
        </authorList>
    </citation>
    <scope>NUCLEOTIDE SEQUENCE [LARGE SCALE GENOMIC DNA]</scope>
    <source>
        <strain>Pm70</strain>
    </source>
</reference>